<feature type="chain" id="PRO_1000138488" description="Anti-adapter protein IraP">
    <location>
        <begin position="1"/>
        <end position="86"/>
    </location>
</feature>
<feature type="coiled-coil region" evidence="1">
    <location>
        <begin position="1"/>
        <end position="36"/>
    </location>
</feature>
<reference key="1">
    <citation type="journal article" date="2008" name="J. Bacteriol.">
        <title>Insights into the environmental resistance gene pool from the genome sequence of the multidrug-resistant environmental isolate Escherichia coli SMS-3-5.</title>
        <authorList>
            <person name="Fricke W.F."/>
            <person name="Wright M.S."/>
            <person name="Lindell A.H."/>
            <person name="Harkins D.M."/>
            <person name="Baker-Austin C."/>
            <person name="Ravel J."/>
            <person name="Stepanauskas R."/>
        </authorList>
    </citation>
    <scope>NUCLEOTIDE SEQUENCE [LARGE SCALE GENOMIC DNA]</scope>
    <source>
        <strain>SMS-3-5 / SECEC</strain>
    </source>
</reference>
<protein>
    <recommendedName>
        <fullName evidence="1">Anti-adapter protein IraP</fullName>
    </recommendedName>
</protein>
<proteinExistence type="inferred from homology"/>
<name>IRAP_ECOSM</name>
<dbReference type="EMBL" id="CP000970">
    <property type="protein sequence ID" value="ACB16167.1"/>
    <property type="molecule type" value="Genomic_DNA"/>
</dbReference>
<dbReference type="RefSeq" id="WP_000792975.1">
    <property type="nucleotide sequence ID" value="NC_010498.1"/>
</dbReference>
<dbReference type="SMR" id="B1LIR6"/>
<dbReference type="KEGG" id="ecm:EcSMS35_0412"/>
<dbReference type="HOGENOM" id="CLU_169517_0_0_6"/>
<dbReference type="Proteomes" id="UP000007011">
    <property type="component" value="Chromosome"/>
</dbReference>
<dbReference type="GO" id="GO:0005737">
    <property type="term" value="C:cytoplasm"/>
    <property type="evidence" value="ECO:0007669"/>
    <property type="project" value="UniProtKB-SubCell"/>
</dbReference>
<dbReference type="GO" id="GO:0009267">
    <property type="term" value="P:cellular response to starvation"/>
    <property type="evidence" value="ECO:0007669"/>
    <property type="project" value="UniProtKB-UniRule"/>
</dbReference>
<dbReference type="HAMAP" id="MF_01198">
    <property type="entry name" value="Anti_adapt_IraP"/>
    <property type="match status" value="1"/>
</dbReference>
<dbReference type="InterPro" id="IPR019732">
    <property type="entry name" value="SigmaS_Anti-adapt_IraP"/>
</dbReference>
<dbReference type="NCBIfam" id="NF007598">
    <property type="entry name" value="PRK10244.1"/>
    <property type="match status" value="1"/>
</dbReference>
<dbReference type="Pfam" id="PF10796">
    <property type="entry name" value="Anti-adapt_IraP"/>
    <property type="match status" value="1"/>
</dbReference>
<evidence type="ECO:0000255" key="1">
    <source>
        <dbReference type="HAMAP-Rule" id="MF_01198"/>
    </source>
</evidence>
<gene>
    <name evidence="1" type="primary">iraP</name>
    <name type="ordered locus">EcSMS35_0412</name>
</gene>
<keyword id="KW-0175">Coiled coil</keyword>
<keyword id="KW-0963">Cytoplasm</keyword>
<keyword id="KW-0346">Stress response</keyword>
<organism>
    <name type="scientific">Escherichia coli (strain SMS-3-5 / SECEC)</name>
    <dbReference type="NCBI Taxonomy" id="439855"/>
    <lineage>
        <taxon>Bacteria</taxon>
        <taxon>Pseudomonadati</taxon>
        <taxon>Pseudomonadota</taxon>
        <taxon>Gammaproteobacteria</taxon>
        <taxon>Enterobacterales</taxon>
        <taxon>Enterobacteriaceae</taxon>
        <taxon>Escherichia</taxon>
    </lineage>
</organism>
<sequence length="86" mass="9936">MKNLIAELLFKLAQKEEESKELCAQVEALEIIVTAMLRNMAQNDQQRLIDQVEGALYEVKPDASIPDDDTELLRNYVKKLLKHPRQ</sequence>
<accession>B1LIR6</accession>
<comment type="function">
    <text evidence="1">Inhibits RpoS proteolysis by regulating RssB activity, thereby increasing the stability of the sigma stress factor RpoS especially during phosphate starvation, but also in stationary phase and during nitrogen starvation. Its effect on RpoS stability is due to its interaction with RssB, which probably blocks the interaction of RssB with RpoS, and the consequent delivery of the RssB-RpoS complex to the ClpXP protein degradation pathway.</text>
</comment>
<comment type="subunit">
    <text evidence="1">Interacts with RssB.</text>
</comment>
<comment type="subcellular location">
    <subcellularLocation>
        <location evidence="1">Cytoplasm</location>
    </subcellularLocation>
</comment>
<comment type="similarity">
    <text evidence="1">Belongs to the IraP family.</text>
</comment>